<proteinExistence type="inferred from homology"/>
<feature type="chain" id="PRO_0000405691" description="Protein SWT21">
    <location>
        <begin position="1"/>
        <end position="426"/>
    </location>
</feature>
<accession>A7TL79</accession>
<comment type="function">
    <text evidence="1">Involved in mRNA splicing. Helps to stabilize the U1 snRNP-5' splice site interaction (By similarity).</text>
</comment>
<comment type="subunit">
    <text evidence="1">Associates with snRNPs.</text>
</comment>
<comment type="subcellular location">
    <subcellularLocation>
        <location evidence="1">Nucleus</location>
    </subcellularLocation>
</comment>
<comment type="similarity">
    <text evidence="2">Belongs to the SWT21 family.</text>
</comment>
<keyword id="KW-0507">mRNA processing</keyword>
<keyword id="KW-0508">mRNA splicing</keyword>
<keyword id="KW-0539">Nucleus</keyword>
<keyword id="KW-1185">Reference proteome</keyword>
<organism>
    <name type="scientific">Vanderwaltozyma polyspora (strain ATCC 22028 / DSM 70294 / BCRC 21397 / CBS 2163 / NBRC 10782 / NRRL Y-8283 / UCD 57-17)</name>
    <name type="common">Kluyveromyces polysporus</name>
    <dbReference type="NCBI Taxonomy" id="436907"/>
    <lineage>
        <taxon>Eukaryota</taxon>
        <taxon>Fungi</taxon>
        <taxon>Dikarya</taxon>
        <taxon>Ascomycota</taxon>
        <taxon>Saccharomycotina</taxon>
        <taxon>Saccharomycetes</taxon>
        <taxon>Saccharomycetales</taxon>
        <taxon>Saccharomycetaceae</taxon>
        <taxon>Vanderwaltozyma</taxon>
    </lineage>
</organism>
<name>SWT21_VANPO</name>
<sequence>MNDKQRWYTLSSTANTFNGANLNIVWDKENTYWSKLASTSSYPYPKLNDSKYCNELGNLNKLDICQDLYWSADGTSLVAINDDYGIRQYLIPESENCDNESMLVPFTRTFSPRSIIASALSPTYSLFNENRSGNMLLISGRDVPLQSYQLDTDSTSCSKPSMTYNTLNDKIERYDIIFSMIFINSSQFITGSVNNKISLYDVRRKEPVVSFDRFKREQSSSKRKSIISCFIDRANIDCNNRYPNIVYFGTYGREMGVVDKRMASQRRLLNFQHGNGVYQILPSFNGHFLYILHRSSNTIDIVDVRKDNKVINQLRIPYKIGTQKMKGTLSETNGLMLGTDYGSVINWQSDMIEFGGLASDGSIVKDYQQSVSECLTSFTGSRINIVQQCPQGNEYFAISYSPDKFSDSDKTSAVKSGISLLRASID</sequence>
<dbReference type="EMBL" id="DS480413">
    <property type="protein sequence ID" value="EDO16954.1"/>
    <property type="molecule type" value="Genomic_DNA"/>
</dbReference>
<dbReference type="RefSeq" id="XP_001644812.1">
    <property type="nucleotide sequence ID" value="XM_001644762.1"/>
</dbReference>
<dbReference type="FunCoup" id="A7TL79">
    <property type="interactions" value="37"/>
</dbReference>
<dbReference type="STRING" id="436907.A7TL79"/>
<dbReference type="GeneID" id="5545139"/>
<dbReference type="KEGG" id="vpo:Kpol_1041p12"/>
<dbReference type="eggNOG" id="ENOG502QVPI">
    <property type="taxonomic scope" value="Eukaryota"/>
</dbReference>
<dbReference type="HOGENOM" id="CLU_662333_0_0_1"/>
<dbReference type="InParanoid" id="A7TL79"/>
<dbReference type="OMA" id="VICQDIF"/>
<dbReference type="OrthoDB" id="239865at2759"/>
<dbReference type="PhylomeDB" id="A7TL79"/>
<dbReference type="Proteomes" id="UP000000267">
    <property type="component" value="Unassembled WGS sequence"/>
</dbReference>
<dbReference type="GO" id="GO:0005634">
    <property type="term" value="C:nucleus"/>
    <property type="evidence" value="ECO:0007669"/>
    <property type="project" value="UniProtKB-SubCell"/>
</dbReference>
<dbReference type="GO" id="GO:0006397">
    <property type="term" value="P:mRNA processing"/>
    <property type="evidence" value="ECO:0007669"/>
    <property type="project" value="UniProtKB-KW"/>
</dbReference>
<dbReference type="GO" id="GO:0008380">
    <property type="term" value="P:RNA splicing"/>
    <property type="evidence" value="ECO:0007669"/>
    <property type="project" value="UniProtKB-KW"/>
</dbReference>
<dbReference type="Gene3D" id="2.130.10.10">
    <property type="entry name" value="YVTN repeat-like/Quinoprotein amine dehydrogenase"/>
    <property type="match status" value="1"/>
</dbReference>
<dbReference type="InterPro" id="IPR051150">
    <property type="entry name" value="SWT21/TCAB1_mRNA_Telomere"/>
</dbReference>
<dbReference type="InterPro" id="IPR015943">
    <property type="entry name" value="WD40/YVTN_repeat-like_dom_sf"/>
</dbReference>
<dbReference type="InterPro" id="IPR036322">
    <property type="entry name" value="WD40_repeat_dom_sf"/>
</dbReference>
<dbReference type="PANTHER" id="PTHR13211">
    <property type="entry name" value="TELOMERASE CAJAL BODY PROTEIN 1"/>
    <property type="match status" value="1"/>
</dbReference>
<dbReference type="PANTHER" id="PTHR13211:SF0">
    <property type="entry name" value="TELOMERASE CAJAL BODY PROTEIN 1"/>
    <property type="match status" value="1"/>
</dbReference>
<dbReference type="SUPFAM" id="SSF50978">
    <property type="entry name" value="WD40 repeat-like"/>
    <property type="match status" value="1"/>
</dbReference>
<evidence type="ECO:0000250" key="1"/>
<evidence type="ECO:0000305" key="2"/>
<gene>
    <name type="primary">SWT21</name>
    <name type="ORF">Kpol_1041p12</name>
</gene>
<protein>
    <recommendedName>
        <fullName>Protein SWT21</fullName>
    </recommendedName>
</protein>
<reference key="1">
    <citation type="journal article" date="2007" name="Proc. Natl. Acad. Sci. U.S.A.">
        <title>Independent sorting-out of thousands of duplicated gene pairs in two yeast species descended from a whole-genome duplication.</title>
        <authorList>
            <person name="Scannell D.R."/>
            <person name="Frank A.C."/>
            <person name="Conant G.C."/>
            <person name="Byrne K.P."/>
            <person name="Woolfit M."/>
            <person name="Wolfe K.H."/>
        </authorList>
    </citation>
    <scope>NUCLEOTIDE SEQUENCE [LARGE SCALE GENOMIC DNA]</scope>
    <source>
        <strain>ATCC 22028 / DSM 70294 / BCRC 21397 / CBS 2163 / NBRC 10782 / NRRL Y-8283 / UCD 57-17</strain>
    </source>
</reference>